<protein>
    <recommendedName>
        <fullName evidence="1">tRNA (guanine-N(1)-)-methyltransferase</fullName>
        <ecNumber evidence="1">2.1.1.228</ecNumber>
    </recommendedName>
    <alternativeName>
        <fullName evidence="1">M1G-methyltransferase</fullName>
    </alternativeName>
    <alternativeName>
        <fullName evidence="1">tRNA [GM37] methyltransferase</fullName>
    </alternativeName>
</protein>
<sequence length="249" mass="27621">MKFDILTLFPAMFEGPLTESILKRASDKGLIEVALHNIRDWAFDKHATADDAPYGGGAGMVMKVEPIAGAIEAVKAKNPNSKVILTTPCGRPFNHQFAEELSREEGVVIICGRYEGVDERVRTLFVDDEISLGDFVLTGGEIAAMVIVDAVSRLVPGVLGSDESAQYDSFADGLLEYPQYTRPPEFRGEKVPDILLSGNHAEIAKWRRKEQMRRTLASRPELLDGIEWSKSDKKLFVEVEKANQEKVAR</sequence>
<reference key="1">
    <citation type="submission" date="2008-07" db="EMBL/GenBank/DDBJ databases">
        <title>Complete sequence of Geobacter bemidjiensis BEM.</title>
        <authorList>
            <consortium name="US DOE Joint Genome Institute"/>
            <person name="Lucas S."/>
            <person name="Copeland A."/>
            <person name="Lapidus A."/>
            <person name="Glavina del Rio T."/>
            <person name="Dalin E."/>
            <person name="Tice H."/>
            <person name="Bruce D."/>
            <person name="Goodwin L."/>
            <person name="Pitluck S."/>
            <person name="Kiss H."/>
            <person name="Brettin T."/>
            <person name="Detter J.C."/>
            <person name="Han C."/>
            <person name="Kuske C.R."/>
            <person name="Schmutz J."/>
            <person name="Larimer F."/>
            <person name="Land M."/>
            <person name="Hauser L."/>
            <person name="Kyrpides N."/>
            <person name="Lykidis A."/>
            <person name="Lovley D."/>
            <person name="Richardson P."/>
        </authorList>
    </citation>
    <scope>NUCLEOTIDE SEQUENCE [LARGE SCALE GENOMIC DNA]</scope>
    <source>
        <strain>ATCC BAA-1014 / DSM 16622 / JCM 12645 / Bem</strain>
    </source>
</reference>
<feature type="chain" id="PRO_1000130176" description="tRNA (guanine-N(1)-)-methyltransferase">
    <location>
        <begin position="1"/>
        <end position="249"/>
    </location>
</feature>
<feature type="binding site" evidence="1">
    <location>
        <position position="112"/>
    </location>
    <ligand>
        <name>S-adenosyl-L-methionine</name>
        <dbReference type="ChEBI" id="CHEBI:59789"/>
    </ligand>
</feature>
<feature type="binding site" evidence="1">
    <location>
        <begin position="132"/>
        <end position="137"/>
    </location>
    <ligand>
        <name>S-adenosyl-L-methionine</name>
        <dbReference type="ChEBI" id="CHEBI:59789"/>
    </ligand>
</feature>
<keyword id="KW-0963">Cytoplasm</keyword>
<keyword id="KW-0489">Methyltransferase</keyword>
<keyword id="KW-1185">Reference proteome</keyword>
<keyword id="KW-0949">S-adenosyl-L-methionine</keyword>
<keyword id="KW-0808">Transferase</keyword>
<keyword id="KW-0819">tRNA processing</keyword>
<proteinExistence type="inferred from homology"/>
<comment type="function">
    <text evidence="1">Specifically methylates guanosine-37 in various tRNAs.</text>
</comment>
<comment type="catalytic activity">
    <reaction evidence="1">
        <text>guanosine(37) in tRNA + S-adenosyl-L-methionine = N(1)-methylguanosine(37) in tRNA + S-adenosyl-L-homocysteine + H(+)</text>
        <dbReference type="Rhea" id="RHEA:36899"/>
        <dbReference type="Rhea" id="RHEA-COMP:10145"/>
        <dbReference type="Rhea" id="RHEA-COMP:10147"/>
        <dbReference type="ChEBI" id="CHEBI:15378"/>
        <dbReference type="ChEBI" id="CHEBI:57856"/>
        <dbReference type="ChEBI" id="CHEBI:59789"/>
        <dbReference type="ChEBI" id="CHEBI:73542"/>
        <dbReference type="ChEBI" id="CHEBI:74269"/>
        <dbReference type="EC" id="2.1.1.228"/>
    </reaction>
</comment>
<comment type="subunit">
    <text evidence="1">Homodimer.</text>
</comment>
<comment type="subcellular location">
    <subcellularLocation>
        <location evidence="1">Cytoplasm</location>
    </subcellularLocation>
</comment>
<comment type="similarity">
    <text evidence="1">Belongs to the RNA methyltransferase TrmD family.</text>
</comment>
<organism>
    <name type="scientific">Citrifermentans bemidjiense (strain ATCC BAA-1014 / DSM 16622 / JCM 12645 / Bem)</name>
    <name type="common">Geobacter bemidjiensis</name>
    <dbReference type="NCBI Taxonomy" id="404380"/>
    <lineage>
        <taxon>Bacteria</taxon>
        <taxon>Pseudomonadati</taxon>
        <taxon>Thermodesulfobacteriota</taxon>
        <taxon>Desulfuromonadia</taxon>
        <taxon>Geobacterales</taxon>
        <taxon>Geobacteraceae</taxon>
        <taxon>Citrifermentans</taxon>
    </lineage>
</organism>
<accession>B5EBC9</accession>
<name>TRMD_CITBB</name>
<evidence type="ECO:0000255" key="1">
    <source>
        <dbReference type="HAMAP-Rule" id="MF_00605"/>
    </source>
</evidence>
<gene>
    <name evidence="1" type="primary">trmD</name>
    <name type="ordered locus">Gbem_3428</name>
</gene>
<dbReference type="EC" id="2.1.1.228" evidence="1"/>
<dbReference type="EMBL" id="CP001124">
    <property type="protein sequence ID" value="ACH40421.1"/>
    <property type="molecule type" value="Genomic_DNA"/>
</dbReference>
<dbReference type="RefSeq" id="WP_012531854.1">
    <property type="nucleotide sequence ID" value="NC_011146.1"/>
</dbReference>
<dbReference type="SMR" id="B5EBC9"/>
<dbReference type="STRING" id="404380.Gbem_3428"/>
<dbReference type="KEGG" id="gbm:Gbem_3428"/>
<dbReference type="eggNOG" id="COG0336">
    <property type="taxonomic scope" value="Bacteria"/>
</dbReference>
<dbReference type="HOGENOM" id="CLU_047363_0_1_7"/>
<dbReference type="OrthoDB" id="9807416at2"/>
<dbReference type="Proteomes" id="UP000008825">
    <property type="component" value="Chromosome"/>
</dbReference>
<dbReference type="GO" id="GO:0005829">
    <property type="term" value="C:cytosol"/>
    <property type="evidence" value="ECO:0007669"/>
    <property type="project" value="TreeGrafter"/>
</dbReference>
<dbReference type="GO" id="GO:0052906">
    <property type="term" value="F:tRNA (guanine(37)-N1)-methyltransferase activity"/>
    <property type="evidence" value="ECO:0007669"/>
    <property type="project" value="UniProtKB-UniRule"/>
</dbReference>
<dbReference type="GO" id="GO:0002939">
    <property type="term" value="P:tRNA N1-guanine methylation"/>
    <property type="evidence" value="ECO:0007669"/>
    <property type="project" value="TreeGrafter"/>
</dbReference>
<dbReference type="CDD" id="cd18080">
    <property type="entry name" value="TrmD-like"/>
    <property type="match status" value="1"/>
</dbReference>
<dbReference type="FunFam" id="1.10.1270.20:FF:000001">
    <property type="entry name" value="tRNA (guanine-N(1)-)-methyltransferase"/>
    <property type="match status" value="1"/>
</dbReference>
<dbReference type="FunFam" id="3.40.1280.10:FF:000001">
    <property type="entry name" value="tRNA (guanine-N(1)-)-methyltransferase"/>
    <property type="match status" value="1"/>
</dbReference>
<dbReference type="Gene3D" id="3.40.1280.10">
    <property type="match status" value="1"/>
</dbReference>
<dbReference type="Gene3D" id="1.10.1270.20">
    <property type="entry name" value="tRNA(m1g37)methyltransferase, domain 2"/>
    <property type="match status" value="1"/>
</dbReference>
<dbReference type="HAMAP" id="MF_00605">
    <property type="entry name" value="TrmD"/>
    <property type="match status" value="1"/>
</dbReference>
<dbReference type="InterPro" id="IPR029028">
    <property type="entry name" value="Alpha/beta_knot_MTases"/>
</dbReference>
<dbReference type="InterPro" id="IPR023148">
    <property type="entry name" value="tRNA_m1G_MeTrfase_C_sf"/>
</dbReference>
<dbReference type="InterPro" id="IPR002649">
    <property type="entry name" value="tRNA_m1G_MeTrfase_TrmD"/>
</dbReference>
<dbReference type="InterPro" id="IPR029026">
    <property type="entry name" value="tRNA_m1G_MTases_N"/>
</dbReference>
<dbReference type="InterPro" id="IPR016009">
    <property type="entry name" value="tRNA_MeTrfase_TRMD/TRM10"/>
</dbReference>
<dbReference type="NCBIfam" id="NF000648">
    <property type="entry name" value="PRK00026.1"/>
    <property type="match status" value="1"/>
</dbReference>
<dbReference type="NCBIfam" id="TIGR00088">
    <property type="entry name" value="trmD"/>
    <property type="match status" value="1"/>
</dbReference>
<dbReference type="PANTHER" id="PTHR46417">
    <property type="entry name" value="TRNA (GUANINE-N(1)-)-METHYLTRANSFERASE"/>
    <property type="match status" value="1"/>
</dbReference>
<dbReference type="PANTHER" id="PTHR46417:SF1">
    <property type="entry name" value="TRNA (GUANINE-N(1)-)-METHYLTRANSFERASE"/>
    <property type="match status" value="1"/>
</dbReference>
<dbReference type="Pfam" id="PF01746">
    <property type="entry name" value="tRNA_m1G_MT"/>
    <property type="match status" value="1"/>
</dbReference>
<dbReference type="PIRSF" id="PIRSF000386">
    <property type="entry name" value="tRNA_mtase"/>
    <property type="match status" value="1"/>
</dbReference>
<dbReference type="SUPFAM" id="SSF75217">
    <property type="entry name" value="alpha/beta knot"/>
    <property type="match status" value="1"/>
</dbReference>